<protein>
    <recommendedName>
        <fullName evidence="1">NAD kinase</fullName>
        <ecNumber evidence="1">2.7.1.23</ecNumber>
    </recommendedName>
    <alternativeName>
        <fullName evidence="1">ATP-dependent NAD kinase</fullName>
    </alternativeName>
</protein>
<accession>Q9HZC0</accession>
<organism>
    <name type="scientific">Pseudomonas aeruginosa (strain ATCC 15692 / DSM 22644 / CIP 104116 / JCM 14847 / LMG 12228 / 1C / PRS 101 / PAO1)</name>
    <dbReference type="NCBI Taxonomy" id="208964"/>
    <lineage>
        <taxon>Bacteria</taxon>
        <taxon>Pseudomonadati</taxon>
        <taxon>Pseudomonadota</taxon>
        <taxon>Gammaproteobacteria</taxon>
        <taxon>Pseudomonadales</taxon>
        <taxon>Pseudomonadaceae</taxon>
        <taxon>Pseudomonas</taxon>
    </lineage>
</organism>
<name>NADK_PSEAE</name>
<evidence type="ECO:0000255" key="1">
    <source>
        <dbReference type="HAMAP-Rule" id="MF_00361"/>
    </source>
</evidence>
<evidence type="ECO:0007829" key="2">
    <source>
        <dbReference type="PDB" id="7QVS"/>
    </source>
</evidence>
<keyword id="KW-0002">3D-structure</keyword>
<keyword id="KW-0067">ATP-binding</keyword>
<keyword id="KW-0963">Cytoplasm</keyword>
<keyword id="KW-0418">Kinase</keyword>
<keyword id="KW-0520">NAD</keyword>
<keyword id="KW-0521">NADP</keyword>
<keyword id="KW-0547">Nucleotide-binding</keyword>
<keyword id="KW-1185">Reference proteome</keyword>
<keyword id="KW-0808">Transferase</keyword>
<proteinExistence type="evidence at protein level"/>
<reference key="1">
    <citation type="journal article" date="2000" name="Nature">
        <title>Complete genome sequence of Pseudomonas aeruginosa PAO1, an opportunistic pathogen.</title>
        <authorList>
            <person name="Stover C.K."/>
            <person name="Pham X.-Q.T."/>
            <person name="Erwin A.L."/>
            <person name="Mizoguchi S.D."/>
            <person name="Warrener P."/>
            <person name="Hickey M.J."/>
            <person name="Brinkman F.S.L."/>
            <person name="Hufnagle W.O."/>
            <person name="Kowalik D.J."/>
            <person name="Lagrou M."/>
            <person name="Garber R.L."/>
            <person name="Goltry L."/>
            <person name="Tolentino E."/>
            <person name="Westbrock-Wadman S."/>
            <person name="Yuan Y."/>
            <person name="Brody L.L."/>
            <person name="Coulter S.N."/>
            <person name="Folger K.R."/>
            <person name="Kas A."/>
            <person name="Larbig K."/>
            <person name="Lim R.M."/>
            <person name="Smith K.A."/>
            <person name="Spencer D.H."/>
            <person name="Wong G.K.-S."/>
            <person name="Wu Z."/>
            <person name="Paulsen I.T."/>
            <person name="Reizer J."/>
            <person name="Saier M.H. Jr."/>
            <person name="Hancock R.E.W."/>
            <person name="Lory S."/>
            <person name="Olson M.V."/>
        </authorList>
    </citation>
    <scope>NUCLEOTIDE SEQUENCE [LARGE SCALE GENOMIC DNA]</scope>
    <source>
        <strain>ATCC 15692 / DSM 22644 / CIP 104116 / JCM 14847 / LMG 12228 / 1C / PRS 101 / PAO1</strain>
    </source>
</reference>
<feature type="chain" id="PRO_0000120646" description="NAD kinase">
    <location>
        <begin position="1"/>
        <end position="295"/>
    </location>
</feature>
<feature type="active site" description="Proton acceptor" evidence="1">
    <location>
        <position position="72"/>
    </location>
</feature>
<feature type="binding site" evidence="1">
    <location>
        <begin position="72"/>
        <end position="73"/>
    </location>
    <ligand>
        <name>NAD(+)</name>
        <dbReference type="ChEBI" id="CHEBI:57540"/>
    </ligand>
</feature>
<feature type="binding site" evidence="1">
    <location>
        <begin position="146"/>
        <end position="147"/>
    </location>
    <ligand>
        <name>NAD(+)</name>
        <dbReference type="ChEBI" id="CHEBI:57540"/>
    </ligand>
</feature>
<feature type="binding site" evidence="1">
    <location>
        <position position="157"/>
    </location>
    <ligand>
        <name>NAD(+)</name>
        <dbReference type="ChEBI" id="CHEBI:57540"/>
    </ligand>
</feature>
<feature type="binding site" evidence="1">
    <location>
        <position position="174"/>
    </location>
    <ligand>
        <name>NAD(+)</name>
        <dbReference type="ChEBI" id="CHEBI:57540"/>
    </ligand>
</feature>
<feature type="binding site" evidence="1">
    <location>
        <position position="176"/>
    </location>
    <ligand>
        <name>NAD(+)</name>
        <dbReference type="ChEBI" id="CHEBI:57540"/>
    </ligand>
</feature>
<feature type="binding site" evidence="1">
    <location>
        <begin position="187"/>
        <end position="192"/>
    </location>
    <ligand>
        <name>NAD(+)</name>
        <dbReference type="ChEBI" id="CHEBI:57540"/>
    </ligand>
</feature>
<feature type="binding site" evidence="1">
    <location>
        <position position="247"/>
    </location>
    <ligand>
        <name>NAD(+)</name>
        <dbReference type="ChEBI" id="CHEBI:57540"/>
    </ligand>
</feature>
<feature type="strand" evidence="2">
    <location>
        <begin position="6"/>
        <end position="11"/>
    </location>
</feature>
<feature type="helix" evidence="2">
    <location>
        <begin position="16"/>
        <end position="31"/>
    </location>
</feature>
<feature type="strand" evidence="2">
    <location>
        <begin position="35"/>
        <end position="39"/>
    </location>
</feature>
<feature type="helix" evidence="2">
    <location>
        <begin position="40"/>
        <end position="45"/>
    </location>
</feature>
<feature type="strand" evidence="2">
    <location>
        <begin position="52"/>
        <end position="54"/>
    </location>
</feature>
<feature type="helix" evidence="2">
    <location>
        <begin position="56"/>
        <end position="62"/>
    </location>
</feature>
<feature type="strand" evidence="2">
    <location>
        <begin position="64"/>
        <end position="70"/>
    </location>
</feature>
<feature type="helix" evidence="2">
    <location>
        <begin position="71"/>
        <end position="82"/>
    </location>
</feature>
<feature type="helix" evidence="2">
    <location>
        <begin position="83"/>
        <end position="85"/>
    </location>
</feature>
<feature type="strand" evidence="2">
    <location>
        <begin position="89"/>
        <end position="92"/>
    </location>
</feature>
<feature type="strand" evidence="2">
    <location>
        <begin position="94"/>
        <end position="96"/>
    </location>
</feature>
<feature type="helix" evidence="2">
    <location>
        <begin position="105"/>
        <end position="107"/>
    </location>
</feature>
<feature type="helix" evidence="2">
    <location>
        <begin position="108"/>
        <end position="116"/>
    </location>
</feature>
<feature type="strand" evidence="2">
    <location>
        <begin position="121"/>
        <end position="125"/>
    </location>
</feature>
<feature type="strand" evidence="2">
    <location>
        <begin position="128"/>
        <end position="134"/>
    </location>
</feature>
<feature type="strand" evidence="2">
    <location>
        <begin position="137"/>
        <end position="151"/>
    </location>
</feature>
<feature type="strand" evidence="2">
    <location>
        <begin position="159"/>
        <end position="165"/>
    </location>
</feature>
<feature type="strand" evidence="2">
    <location>
        <begin position="168"/>
        <end position="181"/>
    </location>
</feature>
<feature type="helix" evidence="2">
    <location>
        <begin position="184"/>
        <end position="187"/>
    </location>
</feature>
<feature type="helix" evidence="2">
    <location>
        <begin position="189"/>
        <end position="192"/>
    </location>
</feature>
<feature type="strand" evidence="2">
    <location>
        <begin position="204"/>
        <end position="211"/>
    </location>
</feature>
<feature type="strand" evidence="2">
    <location>
        <begin position="220"/>
        <end position="223"/>
    </location>
</feature>
<feature type="strand" evidence="2">
    <location>
        <begin position="228"/>
        <end position="232"/>
    </location>
</feature>
<feature type="strand" evidence="2">
    <location>
        <begin position="241"/>
        <end position="244"/>
    </location>
</feature>
<feature type="turn" evidence="2">
    <location>
        <begin position="245"/>
        <end position="247"/>
    </location>
</feature>
<feature type="strand" evidence="2">
    <location>
        <begin position="248"/>
        <end position="251"/>
    </location>
</feature>
<feature type="strand" evidence="2">
    <location>
        <begin position="257"/>
        <end position="262"/>
    </location>
</feature>
<feature type="strand" evidence="2">
    <location>
        <begin position="267"/>
        <end position="271"/>
    </location>
</feature>
<feature type="helix" evidence="2">
    <location>
        <begin position="277"/>
        <end position="285"/>
    </location>
</feature>
<comment type="function">
    <text evidence="1">Involved in the regulation of the intracellular balance of NAD and NADP, and is a key enzyme in the biosynthesis of NADP. Catalyzes specifically the phosphorylation on 2'-hydroxyl of the adenosine moiety of NAD to yield NADP.</text>
</comment>
<comment type="catalytic activity">
    <reaction evidence="1">
        <text>NAD(+) + ATP = ADP + NADP(+) + H(+)</text>
        <dbReference type="Rhea" id="RHEA:18629"/>
        <dbReference type="ChEBI" id="CHEBI:15378"/>
        <dbReference type="ChEBI" id="CHEBI:30616"/>
        <dbReference type="ChEBI" id="CHEBI:57540"/>
        <dbReference type="ChEBI" id="CHEBI:58349"/>
        <dbReference type="ChEBI" id="CHEBI:456216"/>
        <dbReference type="EC" id="2.7.1.23"/>
    </reaction>
</comment>
<comment type="cofactor">
    <cofactor evidence="1">
        <name>a divalent metal cation</name>
        <dbReference type="ChEBI" id="CHEBI:60240"/>
    </cofactor>
</comment>
<comment type="subcellular location">
    <subcellularLocation>
        <location evidence="1">Cytoplasm</location>
    </subcellularLocation>
</comment>
<comment type="similarity">
    <text evidence="1">Belongs to the NAD kinase family.</text>
</comment>
<dbReference type="EC" id="2.7.1.23" evidence="1"/>
<dbReference type="EMBL" id="AE004091">
    <property type="protein sequence ID" value="AAG06476.1"/>
    <property type="molecule type" value="Genomic_DNA"/>
</dbReference>
<dbReference type="PIR" id="D83259">
    <property type="entry name" value="D83259"/>
</dbReference>
<dbReference type="RefSeq" id="NP_251778.1">
    <property type="nucleotide sequence ID" value="NC_002516.2"/>
</dbReference>
<dbReference type="RefSeq" id="WP_003091343.1">
    <property type="nucleotide sequence ID" value="NZ_QZGE01000009.1"/>
</dbReference>
<dbReference type="PDB" id="7MH7">
    <property type="method" value="X-ray"/>
    <property type="resolution" value="2.61 A"/>
    <property type="chains" value="A=1-295"/>
</dbReference>
<dbReference type="PDB" id="7QVS">
    <property type="method" value="X-ray"/>
    <property type="resolution" value="2.30 A"/>
    <property type="chains" value="A/B=1-295"/>
</dbReference>
<dbReference type="PDBsum" id="7MH7"/>
<dbReference type="PDBsum" id="7QVS"/>
<dbReference type="SMR" id="Q9HZC0"/>
<dbReference type="FunCoup" id="Q9HZC0">
    <property type="interactions" value="684"/>
</dbReference>
<dbReference type="STRING" id="208964.PA3088"/>
<dbReference type="PaxDb" id="208964-PA3088"/>
<dbReference type="GeneID" id="882736"/>
<dbReference type="KEGG" id="pae:PA3088"/>
<dbReference type="PATRIC" id="fig|208964.12.peg.3240"/>
<dbReference type="PseudoCAP" id="PA3088"/>
<dbReference type="HOGENOM" id="CLU_008831_0_1_6"/>
<dbReference type="InParanoid" id="Q9HZC0"/>
<dbReference type="OrthoDB" id="9774737at2"/>
<dbReference type="PhylomeDB" id="Q9HZC0"/>
<dbReference type="BioCyc" id="PAER208964:G1FZ6-3141-MONOMER"/>
<dbReference type="Proteomes" id="UP000002438">
    <property type="component" value="Chromosome"/>
</dbReference>
<dbReference type="GO" id="GO:0005737">
    <property type="term" value="C:cytoplasm"/>
    <property type="evidence" value="ECO:0007669"/>
    <property type="project" value="UniProtKB-SubCell"/>
</dbReference>
<dbReference type="GO" id="GO:0005524">
    <property type="term" value="F:ATP binding"/>
    <property type="evidence" value="ECO:0007669"/>
    <property type="project" value="UniProtKB-KW"/>
</dbReference>
<dbReference type="GO" id="GO:0046872">
    <property type="term" value="F:metal ion binding"/>
    <property type="evidence" value="ECO:0007669"/>
    <property type="project" value="UniProtKB-UniRule"/>
</dbReference>
<dbReference type="GO" id="GO:0051287">
    <property type="term" value="F:NAD binding"/>
    <property type="evidence" value="ECO:0007669"/>
    <property type="project" value="UniProtKB-ARBA"/>
</dbReference>
<dbReference type="GO" id="GO:0003951">
    <property type="term" value="F:NAD+ kinase activity"/>
    <property type="evidence" value="ECO:0000318"/>
    <property type="project" value="GO_Central"/>
</dbReference>
<dbReference type="GO" id="GO:0019674">
    <property type="term" value="P:NAD metabolic process"/>
    <property type="evidence" value="ECO:0007669"/>
    <property type="project" value="InterPro"/>
</dbReference>
<dbReference type="GO" id="GO:0006741">
    <property type="term" value="P:NADP biosynthetic process"/>
    <property type="evidence" value="ECO:0000318"/>
    <property type="project" value="GO_Central"/>
</dbReference>
<dbReference type="FunFam" id="2.60.200.30:FF:000001">
    <property type="entry name" value="NAD kinase"/>
    <property type="match status" value="1"/>
</dbReference>
<dbReference type="Gene3D" id="3.40.50.10330">
    <property type="entry name" value="Probable inorganic polyphosphate/atp-NAD kinase, domain 1"/>
    <property type="match status" value="1"/>
</dbReference>
<dbReference type="Gene3D" id="2.60.200.30">
    <property type="entry name" value="Probable inorganic polyphosphate/atp-NAD kinase, domain 2"/>
    <property type="match status" value="1"/>
</dbReference>
<dbReference type="HAMAP" id="MF_00361">
    <property type="entry name" value="NAD_kinase"/>
    <property type="match status" value="1"/>
</dbReference>
<dbReference type="InterPro" id="IPR017438">
    <property type="entry name" value="ATP-NAD_kinase_N"/>
</dbReference>
<dbReference type="InterPro" id="IPR017437">
    <property type="entry name" value="ATP-NAD_kinase_PpnK-typ_C"/>
</dbReference>
<dbReference type="InterPro" id="IPR016064">
    <property type="entry name" value="NAD/diacylglycerol_kinase_sf"/>
</dbReference>
<dbReference type="InterPro" id="IPR002504">
    <property type="entry name" value="NADK"/>
</dbReference>
<dbReference type="NCBIfam" id="NF002306">
    <property type="entry name" value="PRK01231.1"/>
    <property type="match status" value="1"/>
</dbReference>
<dbReference type="PANTHER" id="PTHR20275">
    <property type="entry name" value="NAD KINASE"/>
    <property type="match status" value="1"/>
</dbReference>
<dbReference type="PANTHER" id="PTHR20275:SF0">
    <property type="entry name" value="NAD KINASE"/>
    <property type="match status" value="1"/>
</dbReference>
<dbReference type="Pfam" id="PF01513">
    <property type="entry name" value="NAD_kinase"/>
    <property type="match status" value="1"/>
</dbReference>
<dbReference type="Pfam" id="PF20143">
    <property type="entry name" value="NAD_kinase_C"/>
    <property type="match status" value="1"/>
</dbReference>
<dbReference type="SUPFAM" id="SSF111331">
    <property type="entry name" value="NAD kinase/diacylglycerol kinase-like"/>
    <property type="match status" value="1"/>
</dbReference>
<sequence length="295" mass="32140">MEPFRNIGIIGRLGSTQVLDTIRRLKKFLIDRHLHVILEDTIAEVLPGHGLQTCSRKIMGEICDLVVVVGGDGSMLGAARALARHKVPVLGINRGSLGFLTDIRPDELEAKVGEVLDGQYIVESRFLLDAQVRRGIDSMGQGDALNDVVLHPGKSTRMIEFELYIDGQFVCSQKADGLIVATPTGSTAYALSAGGPIMHPKLDAIVIVPMYPHMLSSRPIVVDGNSELKIVVSPNMQIYPQVSCDGQNHFTCAPGDTVTISKKPQKLRLIHPIDHNYYEICRTKLGWGSRLGGGD</sequence>
<gene>
    <name evidence="1" type="primary">nadK</name>
    <name type="ordered locus">PA3088</name>
</gene>